<feature type="chain" id="PRO_0000274670" description="Protein SERAC1">
    <location>
        <begin position="1"/>
        <end position="654"/>
    </location>
</feature>
<feature type="transmembrane region" description="Helical" evidence="3">
    <location>
        <begin position="32"/>
        <end position="54"/>
    </location>
</feature>
<sequence>MSLAAYCVICCRRMGTSTPPPKSSTYWRDIRNIIKFTGSLILGGSLFITYEVLALKKSLTLDTQVIEREKMKSYIYVHTVSLDKTENHGITYQARKELHKAVRKVLATSARIFRGPFADTFSTVDIEDHDCAVWLLLRKSRSDDRAARLQAVQEMSEARHWHDYQYRIIAQACDMRTLTGLARSKDSDLRFFLRPPPLPSLKEDSSTEEELRHLLASLPQTDLDECIQCFTALALSESSQSLAAQKGGLWCFGGNGLPYAESFGEVPSATVEMFCLEALVKHSEIPTHCDKIEANGGLQLLQRLYQLHKDCPKVQRNIMRILGNMALNEHLHSTIVRSGWVSILAEAIKSQHIMEASHAARTLANLDRETVPDKYHDGVYVLHPQYRTSQPIKADVLFIHGLMGAAFKTWRQQDNDQDLTEKVSEDETKYTTCWPKSWLARDCPALRIISVEYDTSLSDWRARCPTERKSIAFRSNELLRKLRAAGVGDRPVVWVSHSMGGLLVKKMLLEASKRPEMNTIINNTRGIIFYSVPHHGSHLAEYSVNIRYLLFPSLEVKELSKDSPALKTLQDDFLEFAKDKNFQVLSFVETLPTYIGSMIKLHVVPLDSADLGLGDLIPVDVNHLNICKPKKKDAFLYQRTLQFIRDALAKDLEN</sequence>
<accession>Q2TBM9</accession>
<comment type="function">
    <text evidence="2">Facilitates the transport of serine from the cytosol to the mitochondria by interacting with and stabilizing Sideroflexin-1 (SFXN1), a mitochondrial serine transporter, playing a fundamental role in the one-carbon cycle responsible for the synthesis of nucleotides needed for mitochondrial DNA replication. Plays an important role in the phosphatidylglycerol (PG) remodeling that is essential for both mitochondrial function and intracellular cholesterol trafficking. Specifically involved in the exchange of the sn-1 acyl chain from PG 16:0/18:1(9Z) (also known as 1-hexadecanoyl-2-(9Z-octadecenoyl)-sn-glycero-3-phospho-(1'-sn-glycerol)) to PG 18:0/18:1(9Z) (also known as 1-octadecanoyl-2-(9Z-octadecenoyl)-sn-glycero-3-phospho-(1'-sn-glycerol)), a step needed in the bis(monoacylglycerol)phosphate biosynthetic pathway. May have acyltransferase activity although the mechanism for PG remodeling has not been determined.</text>
</comment>
<comment type="subcellular location">
    <subcellularLocation>
        <location evidence="1">Mitochondrion membrane</location>
        <topology evidence="2">Single-pass membrane protein</topology>
    </subcellularLocation>
    <subcellularLocation>
        <location evidence="2">Endoplasmic reticulum</location>
    </subcellularLocation>
    <subcellularLocation>
        <location evidence="2">Mitochondrion</location>
    </subcellularLocation>
    <text evidence="2">Localizes at the endoplasmic reticulum and at the endoplasmic reticulum-mitochondria interface.</text>
</comment>
<comment type="similarity">
    <text evidence="4">Belongs to the SERAC1 family.</text>
</comment>
<gene>
    <name type="primary">SERAC1</name>
</gene>
<keyword id="KW-0256">Endoplasmic reticulum</keyword>
<keyword id="KW-0444">Lipid biosynthesis</keyword>
<keyword id="KW-0443">Lipid metabolism</keyword>
<keyword id="KW-0472">Membrane</keyword>
<keyword id="KW-0496">Mitochondrion</keyword>
<keyword id="KW-0594">Phospholipid biosynthesis</keyword>
<keyword id="KW-1208">Phospholipid metabolism</keyword>
<keyword id="KW-1185">Reference proteome</keyword>
<keyword id="KW-0812">Transmembrane</keyword>
<keyword id="KW-1133">Transmembrane helix</keyword>
<name>SRAC1_BOVIN</name>
<dbReference type="EMBL" id="BC109896">
    <property type="protein sequence ID" value="AAI09897.1"/>
    <property type="molecule type" value="mRNA"/>
</dbReference>
<dbReference type="RefSeq" id="NP_001033639.1">
    <property type="nucleotide sequence ID" value="NM_001038550.2"/>
</dbReference>
<dbReference type="RefSeq" id="XP_005211129.1">
    <property type="nucleotide sequence ID" value="XM_005211072.5"/>
</dbReference>
<dbReference type="RefSeq" id="XP_010807020.1">
    <property type="nucleotide sequence ID" value="XM_010808718.2"/>
</dbReference>
<dbReference type="RefSeq" id="XP_059745679.1">
    <property type="nucleotide sequence ID" value="XM_059889696.1"/>
</dbReference>
<dbReference type="FunCoup" id="Q2TBM9">
    <property type="interactions" value="3058"/>
</dbReference>
<dbReference type="STRING" id="9913.ENSBTAP00000057129"/>
<dbReference type="ESTHER" id="bovin-srac1">
    <property type="family name" value="SERAC1"/>
</dbReference>
<dbReference type="PaxDb" id="9913-ENSBTAP00000015295"/>
<dbReference type="GeneID" id="519860"/>
<dbReference type="KEGG" id="bta:519860"/>
<dbReference type="CTD" id="84947"/>
<dbReference type="VEuPathDB" id="HostDB:ENSBTAG00000011509"/>
<dbReference type="eggNOG" id="KOG2029">
    <property type="taxonomic scope" value="Eukaryota"/>
</dbReference>
<dbReference type="HOGENOM" id="CLU_023317_1_0_1"/>
<dbReference type="InParanoid" id="Q2TBM9"/>
<dbReference type="OMA" id="RRTEYIY"/>
<dbReference type="OrthoDB" id="5086500at2759"/>
<dbReference type="TreeFam" id="TF319689"/>
<dbReference type="Proteomes" id="UP000009136">
    <property type="component" value="Chromosome 9"/>
</dbReference>
<dbReference type="Bgee" id="ENSBTAG00000011509">
    <property type="expression patterns" value="Expressed in spermatid and 104 other cell types or tissues"/>
</dbReference>
<dbReference type="GO" id="GO:0005783">
    <property type="term" value="C:endoplasmic reticulum"/>
    <property type="evidence" value="ECO:0007669"/>
    <property type="project" value="UniProtKB-SubCell"/>
</dbReference>
<dbReference type="GO" id="GO:0016020">
    <property type="term" value="C:membrane"/>
    <property type="evidence" value="ECO:0007669"/>
    <property type="project" value="UniProtKB-SubCell"/>
</dbReference>
<dbReference type="GO" id="GO:0005739">
    <property type="term" value="C:mitochondrion"/>
    <property type="evidence" value="ECO:0007669"/>
    <property type="project" value="UniProtKB-SubCell"/>
</dbReference>
<dbReference type="GO" id="GO:0008654">
    <property type="term" value="P:phospholipid biosynthetic process"/>
    <property type="evidence" value="ECO:0007669"/>
    <property type="project" value="UniProtKB-KW"/>
</dbReference>
<dbReference type="FunFam" id="3.40.50.1820:FF:000088">
    <property type="entry name" value="SERAC1 isoform 1"/>
    <property type="match status" value="1"/>
</dbReference>
<dbReference type="Gene3D" id="3.40.50.1820">
    <property type="entry name" value="alpha/beta hydrolase"/>
    <property type="match status" value="1"/>
</dbReference>
<dbReference type="Gene3D" id="1.25.10.10">
    <property type="entry name" value="Leucine-rich Repeat Variant"/>
    <property type="match status" value="1"/>
</dbReference>
<dbReference type="InterPro" id="IPR029058">
    <property type="entry name" value="AB_hydrolase_fold"/>
</dbReference>
<dbReference type="InterPro" id="IPR011989">
    <property type="entry name" value="ARM-like"/>
</dbReference>
<dbReference type="InterPro" id="IPR016024">
    <property type="entry name" value="ARM-type_fold"/>
</dbReference>
<dbReference type="InterPro" id="IPR052374">
    <property type="entry name" value="SERAC1"/>
</dbReference>
<dbReference type="PANTHER" id="PTHR48182">
    <property type="entry name" value="PROTEIN SERAC1"/>
    <property type="match status" value="1"/>
</dbReference>
<dbReference type="PANTHER" id="PTHR48182:SF2">
    <property type="entry name" value="PROTEIN SERAC1"/>
    <property type="match status" value="1"/>
</dbReference>
<dbReference type="SUPFAM" id="SSF53474">
    <property type="entry name" value="alpha/beta-Hydrolases"/>
    <property type="match status" value="1"/>
</dbReference>
<dbReference type="SUPFAM" id="SSF48371">
    <property type="entry name" value="ARM repeat"/>
    <property type="match status" value="1"/>
</dbReference>
<reference key="1">
    <citation type="submission" date="2005-11" db="EMBL/GenBank/DDBJ databases">
        <authorList>
            <consortium name="NIH - Mammalian Gene Collection (MGC) project"/>
        </authorList>
    </citation>
    <scope>NUCLEOTIDE SEQUENCE [LARGE SCALE MRNA]</scope>
    <source>
        <strain>Crossbred X Angus</strain>
        <tissue>Liver</tissue>
    </source>
</reference>
<proteinExistence type="evidence at transcript level"/>
<protein>
    <recommendedName>
        <fullName>Protein SERAC1</fullName>
    </recommendedName>
    <alternativeName>
        <fullName>Serine active site-containing protein 1</fullName>
    </alternativeName>
</protein>
<evidence type="ECO:0000250" key="1">
    <source>
        <dbReference type="UniProtKB" id="Q3U213"/>
    </source>
</evidence>
<evidence type="ECO:0000250" key="2">
    <source>
        <dbReference type="UniProtKB" id="Q96JX3"/>
    </source>
</evidence>
<evidence type="ECO:0000255" key="3"/>
<evidence type="ECO:0000305" key="4"/>
<organism>
    <name type="scientific">Bos taurus</name>
    <name type="common">Bovine</name>
    <dbReference type="NCBI Taxonomy" id="9913"/>
    <lineage>
        <taxon>Eukaryota</taxon>
        <taxon>Metazoa</taxon>
        <taxon>Chordata</taxon>
        <taxon>Craniata</taxon>
        <taxon>Vertebrata</taxon>
        <taxon>Euteleostomi</taxon>
        <taxon>Mammalia</taxon>
        <taxon>Eutheria</taxon>
        <taxon>Laurasiatheria</taxon>
        <taxon>Artiodactyla</taxon>
        <taxon>Ruminantia</taxon>
        <taxon>Pecora</taxon>
        <taxon>Bovidae</taxon>
        <taxon>Bovinae</taxon>
        <taxon>Bos</taxon>
    </lineage>
</organism>